<gene>
    <name evidence="1" type="primary">glpK</name>
    <name type="ordered locus">Pfl01_4532</name>
</gene>
<feature type="chain" id="PRO_1000020762" description="Glycerol kinase">
    <location>
        <begin position="1"/>
        <end position="500"/>
    </location>
</feature>
<feature type="binding site" evidence="1">
    <location>
        <position position="17"/>
    </location>
    <ligand>
        <name>ADP</name>
        <dbReference type="ChEBI" id="CHEBI:456216"/>
    </ligand>
</feature>
<feature type="binding site" evidence="1">
    <location>
        <position position="17"/>
    </location>
    <ligand>
        <name>ATP</name>
        <dbReference type="ChEBI" id="CHEBI:30616"/>
    </ligand>
</feature>
<feature type="binding site" evidence="1">
    <location>
        <position position="17"/>
    </location>
    <ligand>
        <name>sn-glycerol 3-phosphate</name>
        <dbReference type="ChEBI" id="CHEBI:57597"/>
    </ligand>
</feature>
<feature type="binding site" evidence="1">
    <location>
        <position position="18"/>
    </location>
    <ligand>
        <name>ATP</name>
        <dbReference type="ChEBI" id="CHEBI:30616"/>
    </ligand>
</feature>
<feature type="binding site" evidence="1">
    <location>
        <position position="19"/>
    </location>
    <ligand>
        <name>ATP</name>
        <dbReference type="ChEBI" id="CHEBI:30616"/>
    </ligand>
</feature>
<feature type="binding site" evidence="1">
    <location>
        <position position="21"/>
    </location>
    <ligand>
        <name>ADP</name>
        <dbReference type="ChEBI" id="CHEBI:456216"/>
    </ligand>
</feature>
<feature type="binding site" evidence="1">
    <location>
        <position position="87"/>
    </location>
    <ligand>
        <name>glycerol</name>
        <dbReference type="ChEBI" id="CHEBI:17754"/>
    </ligand>
</feature>
<feature type="binding site" evidence="1">
    <location>
        <position position="87"/>
    </location>
    <ligand>
        <name>sn-glycerol 3-phosphate</name>
        <dbReference type="ChEBI" id="CHEBI:57597"/>
    </ligand>
</feature>
<feature type="binding site" evidence="1">
    <location>
        <position position="88"/>
    </location>
    <ligand>
        <name>glycerol</name>
        <dbReference type="ChEBI" id="CHEBI:17754"/>
    </ligand>
</feature>
<feature type="binding site" evidence="1">
    <location>
        <position position="88"/>
    </location>
    <ligand>
        <name>sn-glycerol 3-phosphate</name>
        <dbReference type="ChEBI" id="CHEBI:57597"/>
    </ligand>
</feature>
<feature type="binding site" evidence="1">
    <location>
        <position position="139"/>
    </location>
    <ligand>
        <name>glycerol</name>
        <dbReference type="ChEBI" id="CHEBI:17754"/>
    </ligand>
</feature>
<feature type="binding site" evidence="1">
    <location>
        <position position="139"/>
    </location>
    <ligand>
        <name>sn-glycerol 3-phosphate</name>
        <dbReference type="ChEBI" id="CHEBI:57597"/>
    </ligand>
</feature>
<feature type="binding site" evidence="1">
    <location>
        <position position="243"/>
    </location>
    <ligand>
        <name>glycerol</name>
        <dbReference type="ChEBI" id="CHEBI:17754"/>
    </ligand>
</feature>
<feature type="binding site" evidence="1">
    <location>
        <position position="243"/>
    </location>
    <ligand>
        <name>sn-glycerol 3-phosphate</name>
        <dbReference type="ChEBI" id="CHEBI:57597"/>
    </ligand>
</feature>
<feature type="binding site" evidence="1">
    <location>
        <position position="244"/>
    </location>
    <ligand>
        <name>glycerol</name>
        <dbReference type="ChEBI" id="CHEBI:17754"/>
    </ligand>
</feature>
<feature type="binding site" evidence="1">
    <location>
        <position position="265"/>
    </location>
    <ligand>
        <name>ADP</name>
        <dbReference type="ChEBI" id="CHEBI:456216"/>
    </ligand>
</feature>
<feature type="binding site" evidence="1">
    <location>
        <position position="265"/>
    </location>
    <ligand>
        <name>ATP</name>
        <dbReference type="ChEBI" id="CHEBI:30616"/>
    </ligand>
</feature>
<feature type="binding site" evidence="1">
    <location>
        <position position="308"/>
    </location>
    <ligand>
        <name>ADP</name>
        <dbReference type="ChEBI" id="CHEBI:456216"/>
    </ligand>
</feature>
<feature type="binding site" evidence="1">
    <location>
        <position position="308"/>
    </location>
    <ligand>
        <name>ATP</name>
        <dbReference type="ChEBI" id="CHEBI:30616"/>
    </ligand>
</feature>
<feature type="binding site" evidence="1">
    <location>
        <position position="312"/>
    </location>
    <ligand>
        <name>ATP</name>
        <dbReference type="ChEBI" id="CHEBI:30616"/>
    </ligand>
</feature>
<feature type="binding site" evidence="1">
    <location>
        <position position="409"/>
    </location>
    <ligand>
        <name>ADP</name>
        <dbReference type="ChEBI" id="CHEBI:456216"/>
    </ligand>
</feature>
<feature type="binding site" evidence="1">
    <location>
        <position position="409"/>
    </location>
    <ligand>
        <name>ATP</name>
        <dbReference type="ChEBI" id="CHEBI:30616"/>
    </ligand>
</feature>
<feature type="binding site" evidence="1">
    <location>
        <position position="413"/>
    </location>
    <ligand>
        <name>ADP</name>
        <dbReference type="ChEBI" id="CHEBI:456216"/>
    </ligand>
</feature>
<evidence type="ECO:0000255" key="1">
    <source>
        <dbReference type="HAMAP-Rule" id="MF_00186"/>
    </source>
</evidence>
<keyword id="KW-0067">ATP-binding</keyword>
<keyword id="KW-0319">Glycerol metabolism</keyword>
<keyword id="KW-0418">Kinase</keyword>
<keyword id="KW-0547">Nucleotide-binding</keyword>
<keyword id="KW-0808">Transferase</keyword>
<dbReference type="EC" id="2.7.1.30" evidence="1"/>
<dbReference type="EMBL" id="CP000094">
    <property type="protein sequence ID" value="ABA76269.1"/>
    <property type="molecule type" value="Genomic_DNA"/>
</dbReference>
<dbReference type="RefSeq" id="WP_011335748.1">
    <property type="nucleotide sequence ID" value="NC_007492.2"/>
</dbReference>
<dbReference type="SMR" id="Q3K7I5"/>
<dbReference type="KEGG" id="pfo:Pfl01_4532"/>
<dbReference type="eggNOG" id="COG0554">
    <property type="taxonomic scope" value="Bacteria"/>
</dbReference>
<dbReference type="HOGENOM" id="CLU_009281_2_3_6"/>
<dbReference type="UniPathway" id="UPA00618">
    <property type="reaction ID" value="UER00672"/>
</dbReference>
<dbReference type="Proteomes" id="UP000002704">
    <property type="component" value="Chromosome"/>
</dbReference>
<dbReference type="GO" id="GO:0005829">
    <property type="term" value="C:cytosol"/>
    <property type="evidence" value="ECO:0007669"/>
    <property type="project" value="TreeGrafter"/>
</dbReference>
<dbReference type="GO" id="GO:0005524">
    <property type="term" value="F:ATP binding"/>
    <property type="evidence" value="ECO:0007669"/>
    <property type="project" value="UniProtKB-UniRule"/>
</dbReference>
<dbReference type="GO" id="GO:0004370">
    <property type="term" value="F:glycerol kinase activity"/>
    <property type="evidence" value="ECO:0000250"/>
    <property type="project" value="UniProtKB"/>
</dbReference>
<dbReference type="GO" id="GO:0019563">
    <property type="term" value="P:glycerol catabolic process"/>
    <property type="evidence" value="ECO:0007669"/>
    <property type="project" value="UniProtKB-UniRule"/>
</dbReference>
<dbReference type="GO" id="GO:0006071">
    <property type="term" value="P:glycerol metabolic process"/>
    <property type="evidence" value="ECO:0000250"/>
    <property type="project" value="UniProtKB"/>
</dbReference>
<dbReference type="GO" id="GO:0006072">
    <property type="term" value="P:glycerol-3-phosphate metabolic process"/>
    <property type="evidence" value="ECO:0007669"/>
    <property type="project" value="InterPro"/>
</dbReference>
<dbReference type="CDD" id="cd07786">
    <property type="entry name" value="FGGY_EcGK_like"/>
    <property type="match status" value="1"/>
</dbReference>
<dbReference type="FunFam" id="3.30.420.40:FF:000007">
    <property type="entry name" value="Glycerol kinase"/>
    <property type="match status" value="1"/>
</dbReference>
<dbReference type="FunFam" id="3.30.420.40:FF:000008">
    <property type="entry name" value="Glycerol kinase"/>
    <property type="match status" value="1"/>
</dbReference>
<dbReference type="Gene3D" id="3.30.420.40">
    <property type="match status" value="2"/>
</dbReference>
<dbReference type="HAMAP" id="MF_00186">
    <property type="entry name" value="Glycerol_kin"/>
    <property type="match status" value="1"/>
</dbReference>
<dbReference type="InterPro" id="IPR043129">
    <property type="entry name" value="ATPase_NBD"/>
</dbReference>
<dbReference type="InterPro" id="IPR000577">
    <property type="entry name" value="Carb_kinase_FGGY"/>
</dbReference>
<dbReference type="InterPro" id="IPR018483">
    <property type="entry name" value="Carb_kinase_FGGY_CS"/>
</dbReference>
<dbReference type="InterPro" id="IPR018485">
    <property type="entry name" value="FGGY_C"/>
</dbReference>
<dbReference type="InterPro" id="IPR018484">
    <property type="entry name" value="FGGY_N"/>
</dbReference>
<dbReference type="InterPro" id="IPR005999">
    <property type="entry name" value="Glycerol_kin"/>
</dbReference>
<dbReference type="NCBIfam" id="TIGR01311">
    <property type="entry name" value="glycerol_kin"/>
    <property type="match status" value="1"/>
</dbReference>
<dbReference type="NCBIfam" id="NF000756">
    <property type="entry name" value="PRK00047.1"/>
    <property type="match status" value="1"/>
</dbReference>
<dbReference type="PANTHER" id="PTHR10196:SF69">
    <property type="entry name" value="GLYCEROL KINASE"/>
    <property type="match status" value="1"/>
</dbReference>
<dbReference type="PANTHER" id="PTHR10196">
    <property type="entry name" value="SUGAR KINASE"/>
    <property type="match status" value="1"/>
</dbReference>
<dbReference type="Pfam" id="PF02782">
    <property type="entry name" value="FGGY_C"/>
    <property type="match status" value="1"/>
</dbReference>
<dbReference type="Pfam" id="PF00370">
    <property type="entry name" value="FGGY_N"/>
    <property type="match status" value="1"/>
</dbReference>
<dbReference type="PIRSF" id="PIRSF000538">
    <property type="entry name" value="GlpK"/>
    <property type="match status" value="1"/>
</dbReference>
<dbReference type="SUPFAM" id="SSF53067">
    <property type="entry name" value="Actin-like ATPase domain"/>
    <property type="match status" value="2"/>
</dbReference>
<dbReference type="PROSITE" id="PS00933">
    <property type="entry name" value="FGGY_KINASES_1"/>
    <property type="match status" value="1"/>
</dbReference>
<dbReference type="PROSITE" id="PS00445">
    <property type="entry name" value="FGGY_KINASES_2"/>
    <property type="match status" value="1"/>
</dbReference>
<protein>
    <recommendedName>
        <fullName evidence="1">Glycerol kinase</fullName>
        <ecNumber evidence="1">2.7.1.30</ecNumber>
    </recommendedName>
    <alternativeName>
        <fullName evidence="1">ATP:glycerol 3-phosphotransferase</fullName>
    </alternativeName>
    <alternativeName>
        <fullName evidence="1">Glycerokinase</fullName>
        <shortName evidence="1">GK</shortName>
    </alternativeName>
</protein>
<name>GLPK_PSEPF</name>
<organism>
    <name type="scientific">Pseudomonas fluorescens (strain Pf0-1)</name>
    <dbReference type="NCBI Taxonomy" id="205922"/>
    <lineage>
        <taxon>Bacteria</taxon>
        <taxon>Pseudomonadati</taxon>
        <taxon>Pseudomonadota</taxon>
        <taxon>Gammaproteobacteria</taxon>
        <taxon>Pseudomonadales</taxon>
        <taxon>Pseudomonadaceae</taxon>
        <taxon>Pseudomonas</taxon>
    </lineage>
</organism>
<accession>Q3K7I5</accession>
<reference key="1">
    <citation type="journal article" date="2009" name="Genome Biol.">
        <title>Genomic and genetic analyses of diversity and plant interactions of Pseudomonas fluorescens.</title>
        <authorList>
            <person name="Silby M.W."/>
            <person name="Cerdeno-Tarraga A.M."/>
            <person name="Vernikos G.S."/>
            <person name="Giddens S.R."/>
            <person name="Jackson R.W."/>
            <person name="Preston G.M."/>
            <person name="Zhang X.-X."/>
            <person name="Moon C.D."/>
            <person name="Gehrig S.M."/>
            <person name="Godfrey S.A.C."/>
            <person name="Knight C.G."/>
            <person name="Malone J.G."/>
            <person name="Robinson Z."/>
            <person name="Spiers A.J."/>
            <person name="Harris S."/>
            <person name="Challis G.L."/>
            <person name="Yaxley A.M."/>
            <person name="Harris D."/>
            <person name="Seeger K."/>
            <person name="Murphy L."/>
            <person name="Rutter S."/>
            <person name="Squares R."/>
            <person name="Quail M.A."/>
            <person name="Saunders E."/>
            <person name="Mavromatis K."/>
            <person name="Brettin T.S."/>
            <person name="Bentley S.D."/>
            <person name="Hothersall J."/>
            <person name="Stephens E."/>
            <person name="Thomas C.M."/>
            <person name="Parkhill J."/>
            <person name="Levy S.B."/>
            <person name="Rainey P.B."/>
            <person name="Thomson N.R."/>
        </authorList>
    </citation>
    <scope>NUCLEOTIDE SEQUENCE [LARGE SCALE GENOMIC DNA]</scope>
    <source>
        <strain>Pf0-1</strain>
    </source>
</reference>
<proteinExistence type="inferred from homology"/>
<comment type="function">
    <text evidence="1">Key enzyme in the regulation of glycerol uptake and metabolism. Catalyzes the phosphorylation of glycerol to yield sn-glycerol 3-phosphate.</text>
</comment>
<comment type="catalytic activity">
    <reaction evidence="1">
        <text>glycerol + ATP = sn-glycerol 3-phosphate + ADP + H(+)</text>
        <dbReference type="Rhea" id="RHEA:21644"/>
        <dbReference type="ChEBI" id="CHEBI:15378"/>
        <dbReference type="ChEBI" id="CHEBI:17754"/>
        <dbReference type="ChEBI" id="CHEBI:30616"/>
        <dbReference type="ChEBI" id="CHEBI:57597"/>
        <dbReference type="ChEBI" id="CHEBI:456216"/>
        <dbReference type="EC" id="2.7.1.30"/>
    </reaction>
</comment>
<comment type="activity regulation">
    <text evidence="1">Inhibited by fructose 1,6-bisphosphate (FBP).</text>
</comment>
<comment type="pathway">
    <text evidence="1">Polyol metabolism; glycerol degradation via glycerol kinase pathway; sn-glycerol 3-phosphate from glycerol: step 1/1.</text>
</comment>
<comment type="similarity">
    <text evidence="1">Belongs to the FGGY kinase family.</text>
</comment>
<sequence>MTDIENKNYIIALDQGTTSSRAIIFDRDANVVCTAQREFAQHYPQAGWVEHDPMEIFATQSAVMVEALAQAGLHHDQVAAIGITNQRETTVVWDKTTGRPVYNAIVWQCRRSTEICQQLKRDGHEDYIRDTTGLVTDPYFSGTKLKWILDNVEGSRERARNGELLFGTVDSWLIWKFTGGKVHVTDYTNASRTMLFNIHTLEWDAKMLEILDIPREMLPEVKASSEIYGRTKSGIAIGGIAGDQQAALFGQMCVEPGQAKNTYGTGCFLLMNTGDKAVKSQHGMLTTIACGPRGEVAYALEGAVFNGGSTVQWLRDELKIVNDAHDTEYFANKVKDSNGVYLVPAFTGLGAPYWDPYARGALFGLTRGVRVDHIIRAALESIAYQTRDVLDAMQQDSGERLKALRVDGGAVANNFLMQFQADILGTQVERPKMRETTALGAAYLAGLACGFWGSLEELRGKAVIEREFEPSLDEVEKEKLYKGWKKAVSRTRDWAREDAE</sequence>